<dbReference type="EC" id="2.1.1.56"/>
<dbReference type="EMBL" id="AY386371">
    <property type="protein sequence ID" value="AAR07445.1"/>
    <property type="molecule type" value="Genomic_DNA"/>
</dbReference>
<dbReference type="RefSeq" id="NP_938344.1">
    <property type="nucleotide sequence ID" value="NC_005179.1"/>
</dbReference>
<dbReference type="SMR" id="Q9QB92"/>
<dbReference type="KEGG" id="vg:2943587"/>
<dbReference type="Proteomes" id="UP000008596">
    <property type="component" value="Segment"/>
</dbReference>
<dbReference type="GO" id="GO:0044423">
    <property type="term" value="C:virion component"/>
    <property type="evidence" value="ECO:0007669"/>
    <property type="project" value="UniProtKB-KW"/>
</dbReference>
<dbReference type="GO" id="GO:0004482">
    <property type="term" value="F:mRNA 5'-cap (guanine-N7-)-methyltransferase activity"/>
    <property type="evidence" value="ECO:0007669"/>
    <property type="project" value="UniProtKB-EC"/>
</dbReference>
<dbReference type="Gene3D" id="3.40.50.11680">
    <property type="entry name" value="Poxvirus mRNA capping enzyme, small subunit"/>
    <property type="match status" value="1"/>
</dbReference>
<dbReference type="InterPro" id="IPR005009">
    <property type="entry name" value="Poxvirus_mRNA-cap_ssu"/>
</dbReference>
<dbReference type="InterPro" id="IPR043096">
    <property type="entry name" value="Poxvirus_mRNA-cap_ssu_sf"/>
</dbReference>
<dbReference type="Pfam" id="PF03341">
    <property type="entry name" value="Pox_mRNA-cap"/>
    <property type="match status" value="1"/>
</dbReference>
<proteinExistence type="predicted"/>
<organismHost>
    <name type="scientific">Erythrocebus patas</name>
    <name type="common">Red guenon</name>
    <name type="synonym">Cercopithecus patas</name>
    <dbReference type="NCBI Taxonomy" id="9538"/>
</organismHost>
<organismHost>
    <name type="scientific">Homo sapiens</name>
    <name type="common">Human</name>
    <dbReference type="NCBI Taxonomy" id="9606"/>
</organismHost>
<organismHost>
    <name type="scientific">Macaca</name>
    <name type="common">macaques</name>
    <dbReference type="NCBI Taxonomy" id="9539"/>
</organismHost>
<organismHost>
    <name type="scientific">Papio hamadryas</name>
    <name type="common">Hamadryas baboon</name>
    <dbReference type="NCBI Taxonomy" id="9557"/>
</organismHost>
<reference key="1">
    <citation type="journal article" date="2003" name="J. Virol.">
        <title>Complete genomic sequence and comparative analysis of the tumorigenic poxvirus Yaba monkey tumor virus.</title>
        <authorList>
            <person name="Brunetti C.R."/>
            <person name="Amano H."/>
            <person name="Ueda Y."/>
            <person name="Qin J."/>
            <person name="Miyamura T."/>
            <person name="Suzuki T."/>
            <person name="Li X."/>
            <person name="Barrett J.W."/>
            <person name="McFadden G."/>
        </authorList>
    </citation>
    <scope>NUCLEOTIDE SEQUENCE [LARGE SCALE GENOMIC DNA]</scope>
</reference>
<name>MCES_YMTV5</name>
<organism>
    <name type="scientific">Yaba monkey tumor virus (strain VR587)</name>
    <name type="common">YMTV</name>
    <dbReference type="NCBI Taxonomy" id="928314"/>
    <lineage>
        <taxon>Viruses</taxon>
        <taxon>Varidnaviria</taxon>
        <taxon>Bamfordvirae</taxon>
        <taxon>Nucleocytoviricota</taxon>
        <taxon>Pokkesviricetes</taxon>
        <taxon>Chitovirales</taxon>
        <taxon>Poxviridae</taxon>
        <taxon>Chordopoxvirinae</taxon>
        <taxon>Yatapoxvirus</taxon>
        <taxon>Yaba monkey tumor virus</taxon>
    </lineage>
</organism>
<evidence type="ECO:0000305" key="1"/>
<accession>Q9QB92</accession>
<gene>
    <name type="ordered locus">89L</name>
    <name type="ORF">B6L</name>
</gene>
<keyword id="KW-0489">Methyltransferase</keyword>
<keyword id="KW-0506">mRNA capping</keyword>
<keyword id="KW-0507">mRNA processing</keyword>
<keyword id="KW-1185">Reference proteome</keyword>
<keyword id="KW-0949">S-adenosyl-L-methionine</keyword>
<keyword id="KW-0808">Transferase</keyword>
<keyword id="KW-0946">Virion</keyword>
<protein>
    <recommendedName>
        <fullName>mRNA-capping enzyme small subunit</fullName>
    </recommendedName>
    <alternativeName>
        <fullName>mRNA (guanine-N(7))-methyltransferase</fullName>
        <ecNumber>2.1.1.56</ecNumber>
    </alternativeName>
    <alternativeName>
        <fullName>mRNA cap methyltransferase</fullName>
    </alternativeName>
</protein>
<sequence length="287" mass="33391">MDQIAKCIKEGTHTLFPFYDNLPDVNLFLGNSPLPSLEYGANYFLQLSRVNDLNRLPTDLLSLFTHEIMVQENDLEKVYDILNIHSVKSYGKTIKADAVVIDLSAKNKLFKKDRELIKSNNYLTENNLYISDYKMLTFEVFRPLFEMSSEKYCIIKLPTLFGRCVIDTTRVYCSLFKSVRLFKCANDSWLKDSAIIVASNACKKNIDYFMSHIRSVTKSLNWKESNNVQFSILKDSVDKEFIDKFLNFSTKVYESLYYVHSLLYSSMTSESKSIENEYQKKLTKLLL</sequence>
<comment type="function">
    <text>Catalyzes the last reaction in the mRNA cap formation pathway.</text>
</comment>
<comment type="catalytic activity">
    <reaction>
        <text>a 5'-end (5'-triphosphoguanosine)-ribonucleoside in mRNA + S-adenosyl-L-methionine = a 5'-end (N(7)-methyl 5'-triphosphoguanosine)-ribonucleoside in mRNA + S-adenosyl-L-homocysteine</text>
        <dbReference type="Rhea" id="RHEA:67008"/>
        <dbReference type="Rhea" id="RHEA-COMP:17166"/>
        <dbReference type="Rhea" id="RHEA-COMP:17167"/>
        <dbReference type="ChEBI" id="CHEBI:57856"/>
        <dbReference type="ChEBI" id="CHEBI:59789"/>
        <dbReference type="ChEBI" id="CHEBI:156461"/>
        <dbReference type="ChEBI" id="CHEBI:167617"/>
        <dbReference type="EC" id="2.1.1.56"/>
    </reaction>
</comment>
<comment type="subunit">
    <text>Heterodimer of a large and a small subunit.</text>
</comment>
<comment type="subcellular location">
    <subcellularLocation>
        <location evidence="1">Virion</location>
    </subcellularLocation>
    <text>All the enzymes and other proteins required to synthesize early mRNAs are packaged within the virion core along with the DNA genome.</text>
</comment>
<feature type="chain" id="PRO_0000210141" description="mRNA-capping enzyme small subunit">
    <location>
        <begin position="1"/>
        <end position="287"/>
    </location>
</feature>